<gene>
    <name evidence="1" type="primary">rsmG</name>
    <name type="ordered locus">EcolC_4254</name>
</gene>
<name>RSMG_ECOLC</name>
<feature type="chain" id="PRO_1000075221" description="Ribosomal RNA small subunit methyltransferase G">
    <location>
        <begin position="1"/>
        <end position="207"/>
    </location>
</feature>
<feature type="binding site" evidence="1">
    <location>
        <position position="73"/>
    </location>
    <ligand>
        <name>S-adenosyl-L-methionine</name>
        <dbReference type="ChEBI" id="CHEBI:59789"/>
    </ligand>
</feature>
<feature type="binding site" evidence="1">
    <location>
        <position position="78"/>
    </location>
    <ligand>
        <name>S-adenosyl-L-methionine</name>
        <dbReference type="ChEBI" id="CHEBI:59789"/>
    </ligand>
</feature>
<feature type="binding site" evidence="1">
    <location>
        <begin position="124"/>
        <end position="125"/>
    </location>
    <ligand>
        <name>S-adenosyl-L-methionine</name>
        <dbReference type="ChEBI" id="CHEBI:59789"/>
    </ligand>
</feature>
<feature type="binding site" evidence="1">
    <location>
        <position position="139"/>
    </location>
    <ligand>
        <name>S-adenosyl-L-methionine</name>
        <dbReference type="ChEBI" id="CHEBI:59789"/>
    </ligand>
</feature>
<reference key="1">
    <citation type="submission" date="2008-02" db="EMBL/GenBank/DDBJ databases">
        <title>Complete sequence of Escherichia coli C str. ATCC 8739.</title>
        <authorList>
            <person name="Copeland A."/>
            <person name="Lucas S."/>
            <person name="Lapidus A."/>
            <person name="Glavina del Rio T."/>
            <person name="Dalin E."/>
            <person name="Tice H."/>
            <person name="Bruce D."/>
            <person name="Goodwin L."/>
            <person name="Pitluck S."/>
            <person name="Kiss H."/>
            <person name="Brettin T."/>
            <person name="Detter J.C."/>
            <person name="Han C."/>
            <person name="Kuske C.R."/>
            <person name="Schmutz J."/>
            <person name="Larimer F."/>
            <person name="Land M."/>
            <person name="Hauser L."/>
            <person name="Kyrpides N."/>
            <person name="Mikhailova N."/>
            <person name="Ingram L."/>
            <person name="Richardson P."/>
        </authorList>
    </citation>
    <scope>NUCLEOTIDE SEQUENCE [LARGE SCALE GENOMIC DNA]</scope>
    <source>
        <strain>ATCC 8739 / DSM 1576 / NBRC 3972 / NCIMB 8545 / WDCM 00012 / Crooks</strain>
    </source>
</reference>
<protein>
    <recommendedName>
        <fullName evidence="1">Ribosomal RNA small subunit methyltransferase G</fullName>
        <ecNumber evidence="1">2.1.1.170</ecNumber>
    </recommendedName>
    <alternativeName>
        <fullName evidence="1">16S rRNA 7-methylguanosine methyltransferase</fullName>
        <shortName evidence="1">16S rRNA m7G methyltransferase</shortName>
    </alternativeName>
</protein>
<comment type="function">
    <text evidence="1">Specifically methylates the N7 position of guanine in position 527 of 16S rRNA.</text>
</comment>
<comment type="catalytic activity">
    <reaction evidence="1">
        <text>guanosine(527) in 16S rRNA + S-adenosyl-L-methionine = N(7)-methylguanosine(527) in 16S rRNA + S-adenosyl-L-homocysteine</text>
        <dbReference type="Rhea" id="RHEA:42732"/>
        <dbReference type="Rhea" id="RHEA-COMP:10209"/>
        <dbReference type="Rhea" id="RHEA-COMP:10210"/>
        <dbReference type="ChEBI" id="CHEBI:57856"/>
        <dbReference type="ChEBI" id="CHEBI:59789"/>
        <dbReference type="ChEBI" id="CHEBI:74269"/>
        <dbReference type="ChEBI" id="CHEBI:74480"/>
        <dbReference type="EC" id="2.1.1.170"/>
    </reaction>
</comment>
<comment type="subcellular location">
    <subcellularLocation>
        <location evidence="1">Cytoplasm</location>
    </subcellularLocation>
</comment>
<comment type="similarity">
    <text evidence="1">Belongs to the methyltransferase superfamily. RNA methyltransferase RsmG family.</text>
</comment>
<organism>
    <name type="scientific">Escherichia coli (strain ATCC 8739 / DSM 1576 / NBRC 3972 / NCIMB 8545 / WDCM 00012 / Crooks)</name>
    <dbReference type="NCBI Taxonomy" id="481805"/>
    <lineage>
        <taxon>Bacteria</taxon>
        <taxon>Pseudomonadati</taxon>
        <taxon>Pseudomonadota</taxon>
        <taxon>Gammaproteobacteria</taxon>
        <taxon>Enterobacterales</taxon>
        <taxon>Enterobacteriaceae</taxon>
        <taxon>Escherichia</taxon>
    </lineage>
</organism>
<proteinExistence type="inferred from homology"/>
<sequence>MLNKLSLLLKDAGISLTDHQKNQLIAYVNMLHKWNKAYNLTSVRDPNEMLVRHILDSIVVAPYLQGERFIDVGTGPGLPGIPLSIVRPEAHFTLLDSLGKRVRFLRQVQHELKLENIEPVQSRVEEFPSEPPFDGVISRAFASLNDMVSWCHHLPGEQGRFYALKGQMPEDEIALLPEEYQVESVVKLQVPALDGERHLVVIKANKI</sequence>
<accession>B1IWZ8</accession>
<keyword id="KW-0963">Cytoplasm</keyword>
<keyword id="KW-0489">Methyltransferase</keyword>
<keyword id="KW-0698">rRNA processing</keyword>
<keyword id="KW-0949">S-adenosyl-L-methionine</keyword>
<keyword id="KW-0808">Transferase</keyword>
<dbReference type="EC" id="2.1.1.170" evidence="1"/>
<dbReference type="EMBL" id="CP000946">
    <property type="protein sequence ID" value="ACA79850.1"/>
    <property type="molecule type" value="Genomic_DNA"/>
</dbReference>
<dbReference type="RefSeq" id="WP_000932839.1">
    <property type="nucleotide sequence ID" value="NZ_MTFT01000013.1"/>
</dbReference>
<dbReference type="SMR" id="B1IWZ8"/>
<dbReference type="GeneID" id="93778227"/>
<dbReference type="KEGG" id="ecl:EcolC_4254"/>
<dbReference type="HOGENOM" id="CLU_065341_2_2_6"/>
<dbReference type="GO" id="GO:0005829">
    <property type="term" value="C:cytosol"/>
    <property type="evidence" value="ECO:0007669"/>
    <property type="project" value="TreeGrafter"/>
</dbReference>
<dbReference type="GO" id="GO:0070043">
    <property type="term" value="F:rRNA (guanine-N7-)-methyltransferase activity"/>
    <property type="evidence" value="ECO:0007669"/>
    <property type="project" value="UniProtKB-UniRule"/>
</dbReference>
<dbReference type="CDD" id="cd02440">
    <property type="entry name" value="AdoMet_MTases"/>
    <property type="match status" value="1"/>
</dbReference>
<dbReference type="FunFam" id="3.40.50.150:FF:000032">
    <property type="entry name" value="Ribosomal RNA small subunit methyltransferase G"/>
    <property type="match status" value="1"/>
</dbReference>
<dbReference type="Gene3D" id="3.40.50.150">
    <property type="entry name" value="Vaccinia Virus protein VP39"/>
    <property type="match status" value="1"/>
</dbReference>
<dbReference type="HAMAP" id="MF_00074">
    <property type="entry name" value="16SrRNA_methyltr_G"/>
    <property type="match status" value="1"/>
</dbReference>
<dbReference type="InterPro" id="IPR003682">
    <property type="entry name" value="rRNA_ssu_MeTfrase_G"/>
</dbReference>
<dbReference type="InterPro" id="IPR029063">
    <property type="entry name" value="SAM-dependent_MTases_sf"/>
</dbReference>
<dbReference type="NCBIfam" id="TIGR00138">
    <property type="entry name" value="rsmG_gidB"/>
    <property type="match status" value="1"/>
</dbReference>
<dbReference type="PANTHER" id="PTHR31760">
    <property type="entry name" value="S-ADENOSYL-L-METHIONINE-DEPENDENT METHYLTRANSFERASES SUPERFAMILY PROTEIN"/>
    <property type="match status" value="1"/>
</dbReference>
<dbReference type="PANTHER" id="PTHR31760:SF0">
    <property type="entry name" value="S-ADENOSYL-L-METHIONINE-DEPENDENT METHYLTRANSFERASES SUPERFAMILY PROTEIN"/>
    <property type="match status" value="1"/>
</dbReference>
<dbReference type="Pfam" id="PF02527">
    <property type="entry name" value="GidB"/>
    <property type="match status" value="1"/>
</dbReference>
<dbReference type="PIRSF" id="PIRSF003078">
    <property type="entry name" value="GidB"/>
    <property type="match status" value="1"/>
</dbReference>
<dbReference type="SUPFAM" id="SSF53335">
    <property type="entry name" value="S-adenosyl-L-methionine-dependent methyltransferases"/>
    <property type="match status" value="1"/>
</dbReference>
<evidence type="ECO:0000255" key="1">
    <source>
        <dbReference type="HAMAP-Rule" id="MF_00074"/>
    </source>
</evidence>